<protein>
    <recommendedName>
        <fullName>UPF0719 inner membrane protein YjfL</fullName>
    </recommendedName>
</protein>
<sequence>MHILDSLLAFSAYFFIGVAMVIIFLFIYSKITPHNEWQLIKNNNTAASLAFSGTLLGYVIPLSSAAINAVSIPDYFAWGGIALVIQLLVFAGVRLYMPALSEKIINHNTAAGMFMGTAALAGGIFNAACMTW</sequence>
<dbReference type="EMBL" id="U14003">
    <property type="protein sequence ID" value="AAA97080.1"/>
    <property type="molecule type" value="Genomic_DNA"/>
</dbReference>
<dbReference type="EMBL" id="U00096">
    <property type="protein sequence ID" value="AAC77141.1"/>
    <property type="molecule type" value="Genomic_DNA"/>
</dbReference>
<dbReference type="EMBL" id="AP009048">
    <property type="protein sequence ID" value="BAE78185.1"/>
    <property type="molecule type" value="Genomic_DNA"/>
</dbReference>
<dbReference type="PIR" id="S56409">
    <property type="entry name" value="S56409"/>
</dbReference>
<dbReference type="RefSeq" id="NP_418605.1">
    <property type="nucleotide sequence ID" value="NC_000913.3"/>
</dbReference>
<dbReference type="RefSeq" id="WP_000547760.1">
    <property type="nucleotide sequence ID" value="NZ_STEB01000013.1"/>
</dbReference>
<dbReference type="BioGRID" id="4261342">
    <property type="interactions" value="2"/>
</dbReference>
<dbReference type="FunCoup" id="P0AF80">
    <property type="interactions" value="14"/>
</dbReference>
<dbReference type="IntAct" id="P0AF80">
    <property type="interactions" value="1"/>
</dbReference>
<dbReference type="STRING" id="511145.b4184"/>
<dbReference type="PaxDb" id="511145-b4184"/>
<dbReference type="EnsemblBacteria" id="AAC77141">
    <property type="protein sequence ID" value="AAC77141"/>
    <property type="gene ID" value="b4184"/>
</dbReference>
<dbReference type="GeneID" id="948701"/>
<dbReference type="KEGG" id="ecj:JW4142"/>
<dbReference type="KEGG" id="eco:b4184"/>
<dbReference type="KEGG" id="ecoc:C3026_22605"/>
<dbReference type="PATRIC" id="fig|1411691.4.peg.2517"/>
<dbReference type="EchoBASE" id="EB2380"/>
<dbReference type="eggNOG" id="COG3766">
    <property type="taxonomic scope" value="Bacteria"/>
</dbReference>
<dbReference type="HOGENOM" id="CLU_122820_0_1_6"/>
<dbReference type="InParanoid" id="P0AF80"/>
<dbReference type="OMA" id="VLNAACM"/>
<dbReference type="OrthoDB" id="5573330at2"/>
<dbReference type="PhylomeDB" id="P0AF80"/>
<dbReference type="BioCyc" id="EcoCyc:G7849-MONOMER"/>
<dbReference type="PRO" id="PR:P0AF80"/>
<dbReference type="Proteomes" id="UP000000625">
    <property type="component" value="Chromosome"/>
</dbReference>
<dbReference type="GO" id="GO:0005886">
    <property type="term" value="C:plasma membrane"/>
    <property type="evidence" value="ECO:0000314"/>
    <property type="project" value="EcoCyc"/>
</dbReference>
<dbReference type="InterPro" id="IPR007140">
    <property type="entry name" value="DUF350"/>
</dbReference>
<dbReference type="PANTHER" id="PTHR40043">
    <property type="entry name" value="UPF0719 INNER MEMBRANE PROTEIN YJFL"/>
    <property type="match status" value="1"/>
</dbReference>
<dbReference type="PANTHER" id="PTHR40043:SF1">
    <property type="entry name" value="UPF0719 INNER MEMBRANE PROTEIN YJFL"/>
    <property type="match status" value="1"/>
</dbReference>
<dbReference type="Pfam" id="PF03994">
    <property type="entry name" value="DUF350"/>
    <property type="match status" value="1"/>
</dbReference>
<proteinExistence type="evidence at protein level"/>
<reference key="1">
    <citation type="journal article" date="1995" name="Nucleic Acids Res.">
        <title>Analysis of the Escherichia coli genome VI: DNA sequence of the region from 92.8 through 100 minutes.</title>
        <authorList>
            <person name="Burland V.D."/>
            <person name="Plunkett G. III"/>
            <person name="Sofia H.J."/>
            <person name="Daniels D.L."/>
            <person name="Blattner F.R."/>
        </authorList>
    </citation>
    <scope>NUCLEOTIDE SEQUENCE [LARGE SCALE GENOMIC DNA]</scope>
    <source>
        <strain>K12 / MG1655 / ATCC 47076</strain>
    </source>
</reference>
<reference key="2">
    <citation type="journal article" date="1997" name="Science">
        <title>The complete genome sequence of Escherichia coli K-12.</title>
        <authorList>
            <person name="Blattner F.R."/>
            <person name="Plunkett G. III"/>
            <person name="Bloch C.A."/>
            <person name="Perna N.T."/>
            <person name="Burland V."/>
            <person name="Riley M."/>
            <person name="Collado-Vides J."/>
            <person name="Glasner J.D."/>
            <person name="Rode C.K."/>
            <person name="Mayhew G.F."/>
            <person name="Gregor J."/>
            <person name="Davis N.W."/>
            <person name="Kirkpatrick H.A."/>
            <person name="Goeden M.A."/>
            <person name="Rose D.J."/>
            <person name="Mau B."/>
            <person name="Shao Y."/>
        </authorList>
    </citation>
    <scope>NUCLEOTIDE SEQUENCE [LARGE SCALE GENOMIC DNA]</scope>
    <source>
        <strain>K12 / MG1655 / ATCC 47076</strain>
    </source>
</reference>
<reference key="3">
    <citation type="journal article" date="2006" name="Mol. Syst. Biol.">
        <title>Highly accurate genome sequences of Escherichia coli K-12 strains MG1655 and W3110.</title>
        <authorList>
            <person name="Hayashi K."/>
            <person name="Morooka N."/>
            <person name="Yamamoto Y."/>
            <person name="Fujita K."/>
            <person name="Isono K."/>
            <person name="Choi S."/>
            <person name="Ohtsubo E."/>
            <person name="Baba T."/>
            <person name="Wanner B.L."/>
            <person name="Mori H."/>
            <person name="Horiuchi T."/>
        </authorList>
    </citation>
    <scope>NUCLEOTIDE SEQUENCE [LARGE SCALE GENOMIC DNA]</scope>
    <source>
        <strain>K12 / W3110 / ATCC 27325 / DSM 5911</strain>
    </source>
</reference>
<reference key="4">
    <citation type="journal article" date="2005" name="Science">
        <title>Global topology analysis of the Escherichia coli inner membrane proteome.</title>
        <authorList>
            <person name="Daley D.O."/>
            <person name="Rapp M."/>
            <person name="Granseth E."/>
            <person name="Melen K."/>
            <person name="Drew D."/>
            <person name="von Heijne G."/>
        </authorList>
    </citation>
    <scope>TOPOLOGY [LARGE SCALE ANALYSIS]</scope>
    <source>
        <strain>K12 / MG1655 / ATCC 47076</strain>
    </source>
</reference>
<accession>P0AF80</accession>
<accession>P39294</accession>
<accession>Q2M6C1</accession>
<feature type="chain" id="PRO_0000169750" description="UPF0719 inner membrane protein YjfL">
    <location>
        <begin position="1"/>
        <end position="132"/>
    </location>
</feature>
<feature type="topological domain" description="Periplasmic" evidence="1">
    <location>
        <begin position="1"/>
        <end position="6"/>
    </location>
</feature>
<feature type="transmembrane region" description="Helical" evidence="1">
    <location>
        <begin position="7"/>
        <end position="27"/>
    </location>
</feature>
<feature type="topological domain" description="Cytoplasmic" evidence="1">
    <location>
        <begin position="28"/>
        <end position="46"/>
    </location>
</feature>
<feature type="transmembrane region" description="Helical" evidence="1">
    <location>
        <begin position="47"/>
        <end position="67"/>
    </location>
</feature>
<feature type="topological domain" description="Periplasmic" evidence="1">
    <location>
        <begin position="68"/>
        <end position="71"/>
    </location>
</feature>
<feature type="transmembrane region" description="Helical" evidence="1">
    <location>
        <begin position="72"/>
        <end position="92"/>
    </location>
</feature>
<feature type="topological domain" description="Cytoplasmic" evidence="1">
    <location>
        <begin position="93"/>
        <end position="109"/>
    </location>
</feature>
<feature type="transmembrane region" description="Helical" evidence="1">
    <location>
        <begin position="110"/>
        <end position="130"/>
    </location>
</feature>
<feature type="topological domain" description="Periplasmic" evidence="1">
    <location>
        <begin position="131"/>
        <end position="132"/>
    </location>
</feature>
<keyword id="KW-0997">Cell inner membrane</keyword>
<keyword id="KW-1003">Cell membrane</keyword>
<keyword id="KW-0472">Membrane</keyword>
<keyword id="KW-1185">Reference proteome</keyword>
<keyword id="KW-0812">Transmembrane</keyword>
<keyword id="KW-1133">Transmembrane helix</keyword>
<name>YJFL_ECOLI</name>
<organism>
    <name type="scientific">Escherichia coli (strain K12)</name>
    <dbReference type="NCBI Taxonomy" id="83333"/>
    <lineage>
        <taxon>Bacteria</taxon>
        <taxon>Pseudomonadati</taxon>
        <taxon>Pseudomonadota</taxon>
        <taxon>Gammaproteobacteria</taxon>
        <taxon>Enterobacterales</taxon>
        <taxon>Enterobacteriaceae</taxon>
        <taxon>Escherichia</taxon>
    </lineage>
</organism>
<gene>
    <name type="primary">yjfL</name>
    <name type="ordered locus">b4184</name>
    <name type="ordered locus">JW4142</name>
</gene>
<evidence type="ECO:0000255" key="1"/>
<evidence type="ECO:0000305" key="2"/>
<comment type="subcellular location">
    <subcellularLocation>
        <location>Cell inner membrane</location>
        <topology>Multi-pass membrane protein</topology>
    </subcellularLocation>
</comment>
<comment type="similarity">
    <text evidence="2">Belongs to the UPF0719 family.</text>
</comment>